<proteinExistence type="evidence at protein level"/>
<sequence>MDSWFILVLFGSGLIHVSANNATTVSPSLGTTRLIKTSTTELAKEENKTSNSTSSVISLSVAPTFSPNLTLEPTYVTTVNSSHSDNGTRRAASTESGGTTISPNGSWLIENQFTDAITEPWEGNSSTAATTPETFPPADETPIIAVMVALSSLLVIVFIIIVLYMLRFKKYKQAGSHSNSFRLSNGRTEDVEPQSVPLLARSPSTNRKYPPLPVDKLEEEINRRMADDNKLFREEFNALPACPIQATCEAASKEENKEKNRYVNILPFLSLAVSKDAVKALNKTTPLLERRFIGKSNSRGCLSDDHSRVHLTPVEGVPDSDYINASFINGYQEKNKFIAAQGPKEETVNDFWRMIWEQNTATIVMVTNLKERKECKCAQYWPDQGCWTYGNVRVSVEDVTVLVDYTVRKFCIQQVGDVTNRKPQRLITQFHFTSWPDFGVPFTPIGMLKFLKKVKACNPQYAGAIVVHCSAGVGRTGTFVVIDAMLDMMHSERKVDVYGFVSRIRAQRCQMVQTDMQYVFIYQALLEHYLYGDTELEVTSLETHLQKIYNKIPGTSNNGLEEEFKKLTSIKIQNDKMRTGNLPANMKKNRVLQIIPYEFNRVIIPVKRGEENTDYVNASFIDGYRQKDSYIASQGPLLHTIEDFWRMIWEWKSCSIVMLTELEERGQEKCAQYWPSDGLVSYGDITVELKKEEECESYTVRDLLVTNTRENKSRQIRQFHFHGWPEVGIPSDGKGMINIIAAVQKQQQQSGNHPITVHCSAGAGRTGTFCALSTVLERVKAEGILDVFQTVKSLRLQRPHMVQTLEQYEFCYKVVQEYIDAFSDYANFK</sequence>
<gene>
    <name type="primary">Ptpra</name>
    <name type="synonym">Lrp</name>
    <name type="synonym">Ptpa</name>
</gene>
<name>PTPRA_MOUSE</name>
<reference key="1">
    <citation type="journal article" date="1990" name="Proc. Natl. Acad. Sci. U.S.A.">
        <title>Identification of an additional member of the protein-tyrosine-phosphatase family: evidence for alternative splicing in the tyrosine phosphatase domain.</title>
        <authorList>
            <person name="Matthews R.J."/>
            <person name="Cahir E.D."/>
            <person name="Thomas M.L."/>
        </authorList>
    </citation>
    <scope>NUCLEOTIDE SEQUENCE [GENOMIC DNA / MRNA] (ISOFORMS 1 AND 2)</scope>
    <scope>TISSUE SPECIFICITY</scope>
    <source>
        <strain>C57BL/6 X DBA/2</strain>
    </source>
</reference>
<reference key="2">
    <citation type="journal article" date="1990" name="Proc. Natl. Acad. Sci. U.S.A.">
        <title>Cloning and expression of a widely expressed receptor tyrosine phosphatase.</title>
        <authorList>
            <person name="Sap J."/>
            <person name="D'Eustachio P."/>
            <person name="Givol D."/>
            <person name="Schlessinger J."/>
        </authorList>
    </citation>
    <scope>NUCLEOTIDE SEQUENCE [MRNA] (ISOFORM 2)</scope>
    <scope>TISSUE SPECIFICITY</scope>
    <source>
        <strain>BALB/cJ</strain>
        <tissue>Brain</tissue>
    </source>
</reference>
<reference key="3">
    <citation type="journal article" date="1993" name="Genomics">
        <title>Leukocyte common antigen-related phosphatase (LRP) gene structure: conservation of the genomic organization of transmembrane protein tyrosine phosphatases.</title>
        <authorList>
            <person name="Wong E.C."/>
            <person name="Mullersman J.E."/>
            <person name="Thomas M.L."/>
        </authorList>
    </citation>
    <scope>NUCLEOTIDE SEQUENCE [GENOMIC DNA]</scope>
</reference>
<reference key="4">
    <citation type="journal article" date="2009" name="PLoS Biol.">
        <title>Lineage-specific biology revealed by a finished genome assembly of the mouse.</title>
        <authorList>
            <person name="Church D.M."/>
            <person name="Goodstadt L."/>
            <person name="Hillier L.W."/>
            <person name="Zody M.C."/>
            <person name="Goldstein S."/>
            <person name="She X."/>
            <person name="Bult C.J."/>
            <person name="Agarwala R."/>
            <person name="Cherry J.L."/>
            <person name="DiCuccio M."/>
            <person name="Hlavina W."/>
            <person name="Kapustin Y."/>
            <person name="Meric P."/>
            <person name="Maglott D."/>
            <person name="Birtle Z."/>
            <person name="Marques A.C."/>
            <person name="Graves T."/>
            <person name="Zhou S."/>
            <person name="Teague B."/>
            <person name="Potamousis K."/>
            <person name="Churas C."/>
            <person name="Place M."/>
            <person name="Herschleb J."/>
            <person name="Runnheim R."/>
            <person name="Forrest D."/>
            <person name="Amos-Landgraf J."/>
            <person name="Schwartz D.C."/>
            <person name="Cheng Z."/>
            <person name="Lindblad-Toh K."/>
            <person name="Eichler E.E."/>
            <person name="Ponting C.P."/>
        </authorList>
    </citation>
    <scope>NUCLEOTIDE SEQUENCE [LARGE SCALE GENOMIC DNA]</scope>
    <source>
        <strain>C57BL/6J</strain>
    </source>
</reference>
<reference key="5">
    <citation type="submission" date="2005-07" db="EMBL/GenBank/DDBJ databases">
        <authorList>
            <person name="Mural R.J."/>
            <person name="Adams M.D."/>
            <person name="Myers E.W."/>
            <person name="Smith H.O."/>
            <person name="Venter J.C."/>
        </authorList>
    </citation>
    <scope>NUCLEOTIDE SEQUENCE [LARGE SCALE GENOMIC DNA]</scope>
</reference>
<reference key="6">
    <citation type="journal article" date="1992" name="Biochem. Biophys. Res. Commun.">
        <title>Differential expression of a novel murine non-receptor protein tyrosine phosphatase during differentiation of P19 embryonal carcinoma cells.</title>
        <authorList>
            <person name="den Hertog J."/>
            <person name="Pals C.E."/>
            <person name="Jonk L.J."/>
            <person name="Kruijer W."/>
        </authorList>
    </citation>
    <scope>NUCLEOTIDE SEQUENCE [MRNA] OF 322-356</scope>
</reference>
<reference key="7">
    <citation type="journal article" date="1991" name="Blood">
        <title>Identification of novel protein tyrosine phosphatases of hematopoietic cells by polymerase chain reaction amplification.</title>
        <authorList>
            <person name="Yi T."/>
            <person name="Cleveland J.L."/>
            <person name="Ihle J.N."/>
        </authorList>
    </citation>
    <scope>NUCLEOTIDE SEQUENCE [MRNA] OF 358-467</scope>
    <scope>TISSUE SPECIFICITY</scope>
    <source>
        <strain>BALB/cJ</strain>
        <tissue>Myeloid leukemia cell</tissue>
    </source>
</reference>
<reference key="8">
    <citation type="journal article" date="1995" name="Biochem. J.">
        <title>A novel receptor-type protein tyrosine phosphatase with a single catalytic domain is specifically expressed in mouse brain.</title>
        <authorList>
            <person name="Hendriks W."/>
            <person name="Schepens J."/>
            <person name="Brugman C."/>
            <person name="Zeeuwen P."/>
            <person name="Wieringa B."/>
        </authorList>
    </citation>
    <scope>NUCLEOTIDE SEQUENCE [MRNA] OF 358-467</scope>
    <source>
        <strain>BALB/cJ</strain>
        <tissue>Brain</tissue>
    </source>
</reference>
<reference key="9">
    <citation type="submission" date="2009-01" db="UniProtKB">
        <authorList>
            <person name="Lubec G."/>
            <person name="Sunyer B."/>
            <person name="Chen W.-Q."/>
        </authorList>
    </citation>
    <scope>PROTEIN SEQUENCE OF 566-576</scope>
    <scope>IDENTIFICATION BY MASS SPECTROMETRY</scope>
    <source>
        <strain>OF1</strain>
        <tissue>Hippocampus</tissue>
    </source>
</reference>
<reference key="10">
    <citation type="journal article" date="1992" name="Mol. Biol. Rep.">
        <title>Identification and typing of members of the protein-tyrosine phosphatase gene family expressed in mouse brain.</title>
        <authorList>
            <person name="Schepens J."/>
            <person name="Zeeuwen P."/>
            <person name="Wieringa B."/>
            <person name="Hendriks W."/>
        </authorList>
    </citation>
    <scope>NUCLEOTIDE SEQUENCE [MRNA] OF 651-756</scope>
    <source>
        <strain>BALB/cJ</strain>
        <tissue>Brain</tissue>
    </source>
</reference>
<reference key="11">
    <citation type="journal article" date="2005" name="Nat. Biotechnol.">
        <title>Immunoaffinity profiling of tyrosine phosphorylation in cancer cells.</title>
        <authorList>
            <person name="Rush J."/>
            <person name="Moritz A."/>
            <person name="Lee K.A."/>
            <person name="Guo A."/>
            <person name="Goss V.L."/>
            <person name="Spek E.J."/>
            <person name="Zhang H."/>
            <person name="Zha X.-M."/>
            <person name="Polakiewicz R.D."/>
            <person name="Comb M.J."/>
        </authorList>
    </citation>
    <scope>IDENTIFICATION BY MASS SPECTROMETRY [LARGE SCALE ANALYSIS]</scope>
</reference>
<reference key="12">
    <citation type="journal article" date="2007" name="J. Immunol.">
        <title>Quantitative time-resolved phosphoproteomic analysis of mast cell signaling.</title>
        <authorList>
            <person name="Cao L."/>
            <person name="Yu K."/>
            <person name="Banh C."/>
            <person name="Nguyen V."/>
            <person name="Ritz A."/>
            <person name="Raphael B.J."/>
            <person name="Kawakami Y."/>
            <person name="Kawakami T."/>
            <person name="Salomon A.R."/>
        </authorList>
    </citation>
    <scope>PHOSPHORYLATION [LARGE SCALE ANALYSIS] AT TYR-825</scope>
    <scope>IDENTIFICATION BY MASS SPECTROMETRY [LARGE SCALE ANALYSIS]</scope>
    <source>
        <tissue>Mast cell</tissue>
    </source>
</reference>
<reference key="13">
    <citation type="journal article" date="2008" name="J. Proteome Res.">
        <title>Large-scale identification and evolution indexing of tyrosine phosphorylation sites from murine brain.</title>
        <authorList>
            <person name="Ballif B.A."/>
            <person name="Carey G.R."/>
            <person name="Sunyaev S.R."/>
            <person name="Gygi S.P."/>
        </authorList>
    </citation>
    <scope>PHOSPHORYLATION [LARGE SCALE ANALYSIS] AT TYR-825</scope>
    <scope>IDENTIFICATION BY MASS SPECTROMETRY [LARGE SCALE ANALYSIS]</scope>
    <source>
        <tissue>Brain</tissue>
    </source>
</reference>
<reference key="14">
    <citation type="journal article" date="2009" name="Immunity">
        <title>The phagosomal proteome in interferon-gamma-activated macrophages.</title>
        <authorList>
            <person name="Trost M."/>
            <person name="English L."/>
            <person name="Lemieux S."/>
            <person name="Courcelles M."/>
            <person name="Desjardins M."/>
            <person name="Thibault P."/>
        </authorList>
    </citation>
    <scope>PHOSPHORYLATION [LARGE SCALE ANALYSIS] AT SER-202; SER-204 AND TYR-825</scope>
    <scope>IDENTIFICATION BY MASS SPECTROMETRY [LARGE SCALE ANALYSIS]</scope>
</reference>
<reference key="15">
    <citation type="journal article" date="2010" name="Cell">
        <title>A tissue-specific atlas of mouse protein phosphorylation and expression.</title>
        <authorList>
            <person name="Huttlin E.L."/>
            <person name="Jedrychowski M.P."/>
            <person name="Elias J.E."/>
            <person name="Goswami T."/>
            <person name="Rad R."/>
            <person name="Beausoleil S.A."/>
            <person name="Villen J."/>
            <person name="Haas W."/>
            <person name="Sowa M.E."/>
            <person name="Gygi S.P."/>
        </authorList>
    </citation>
    <scope>PHOSPHORYLATION [LARGE SCALE ANALYSIS] AT TYR-825</scope>
    <scope>IDENTIFICATION BY MASS SPECTROMETRY [LARGE SCALE ANALYSIS]</scope>
    <source>
        <tissue>Brain</tissue>
        <tissue>Brown adipose tissue</tissue>
        <tissue>Heart</tissue>
        <tissue>Kidney</tissue>
        <tissue>Lung</tissue>
        <tissue>Pancreas</tissue>
        <tissue>Spleen</tissue>
    </source>
</reference>
<reference key="16">
    <citation type="journal article" date="2012" name="Mol. Cell. Biol.">
        <title>Protein tyrosine phosphatase alpha phosphotyrosyl-789 binds BCAR3 to position Cas for activation at integrin-mediated focal adhesions.</title>
        <authorList>
            <person name="Sun G."/>
            <person name="Cheng S.Y."/>
            <person name="Chen M."/>
            <person name="Lim C.J."/>
            <person name="Pallen C.J."/>
        </authorList>
    </citation>
    <scope>FUNCTION</scope>
    <scope>IDENTIFICATION IN A COMPLEX WITH BCAR3; BCAR1 AND SRC</scope>
    <scope>INTERACTION WITH GRB2 AND BCAR3</scope>
    <scope>SUBCELLULAR LOCATION</scope>
    <scope>PHOSPHORYLATION AT TYR-825</scope>
</reference>
<reference key="17">
    <citation type="journal article" date="1996" name="Nature">
        <title>Structural basis for inhibition of receptor protein-tyrosine phosphatase-alpha by dimerization.</title>
        <authorList>
            <person name="Bilwes A.M."/>
            <person name="den Hertog J."/>
            <person name="Hunter T."/>
            <person name="Noel J.P."/>
        </authorList>
    </citation>
    <scope>X-RAY CRYSTALLOGRAPHY (2.3 ANGSTROMS) OF 202-503</scope>
</reference>
<organism>
    <name type="scientific">Mus musculus</name>
    <name type="common">Mouse</name>
    <dbReference type="NCBI Taxonomy" id="10090"/>
    <lineage>
        <taxon>Eukaryota</taxon>
        <taxon>Metazoa</taxon>
        <taxon>Chordata</taxon>
        <taxon>Craniata</taxon>
        <taxon>Vertebrata</taxon>
        <taxon>Euteleostomi</taxon>
        <taxon>Mammalia</taxon>
        <taxon>Eutheria</taxon>
        <taxon>Euarchontoglires</taxon>
        <taxon>Glires</taxon>
        <taxon>Rodentia</taxon>
        <taxon>Myomorpha</taxon>
        <taxon>Muroidea</taxon>
        <taxon>Muridae</taxon>
        <taxon>Murinae</taxon>
        <taxon>Mus</taxon>
        <taxon>Mus</taxon>
    </lineage>
</organism>
<accession>P18052</accession>
<accession>A2AHF2</accession>
<accession>Q61808</accession>
<protein>
    <recommendedName>
        <fullName>Receptor-type tyrosine-protein phosphatase alpha</fullName>
        <shortName>Protein-tyrosine phosphatase alpha</shortName>
        <shortName>R-PTP-alpha</shortName>
        <ecNumber>3.1.3.48</ecNumber>
    </recommendedName>
    <alternativeName>
        <fullName>LCA-related phosphatase</fullName>
    </alternativeName>
    <alternativeName>
        <fullName>PTPTY-28</fullName>
    </alternativeName>
</protein>
<dbReference type="EC" id="3.1.3.48"/>
<dbReference type="EMBL" id="M36033">
    <property type="protein sequence ID" value="AAA39448.1"/>
    <property type="molecule type" value="mRNA"/>
</dbReference>
<dbReference type="EMBL" id="M36034">
    <property type="protein sequence ID" value="AAA39449.2"/>
    <property type="molecule type" value="Genomic_DNA"/>
</dbReference>
<dbReference type="EMBL" id="L13607">
    <property type="status" value="NOT_ANNOTATED_CDS"/>
    <property type="molecule type" value="Genomic_DNA"/>
</dbReference>
<dbReference type="EMBL" id="AL731707">
    <property type="status" value="NOT_ANNOTATED_CDS"/>
    <property type="molecule type" value="Genomic_DNA"/>
</dbReference>
<dbReference type="EMBL" id="CH466519">
    <property type="protein sequence ID" value="EDL28272.1"/>
    <property type="molecule type" value="Genomic_DNA"/>
</dbReference>
<dbReference type="EMBL" id="Z23054">
    <property type="protein sequence ID" value="CAA80589.1"/>
    <property type="molecule type" value="mRNA"/>
</dbReference>
<dbReference type="EMBL" id="Z23055">
    <property type="protein sequence ID" value="CAA80590.1"/>
    <property type="molecule type" value="mRNA"/>
</dbReference>
<dbReference type="CCDS" id="CCDS16743.1">
    <molecule id="P18052-1"/>
</dbReference>
<dbReference type="PIR" id="A47373">
    <property type="entry name" value="A47373"/>
</dbReference>
<dbReference type="RefSeq" id="NP_033006.2">
    <molecule id="P18052-1"/>
    <property type="nucleotide sequence ID" value="NM_008980.2"/>
</dbReference>
<dbReference type="PDB" id="1P15">
    <property type="method" value="X-ray"/>
    <property type="resolution" value="2.00 A"/>
    <property type="chains" value="A/B=577-829"/>
</dbReference>
<dbReference type="PDB" id="1YFO">
    <property type="method" value="X-ray"/>
    <property type="resolution" value="2.25 A"/>
    <property type="chains" value="A/B=202-539"/>
</dbReference>
<dbReference type="PDBsum" id="1P15"/>
<dbReference type="PDBsum" id="1YFO"/>
<dbReference type="SMR" id="P18052"/>
<dbReference type="BioGRID" id="202491">
    <property type="interactions" value="36"/>
</dbReference>
<dbReference type="CORUM" id="P18052"/>
<dbReference type="FunCoup" id="P18052">
    <property type="interactions" value="1604"/>
</dbReference>
<dbReference type="IntAct" id="P18052">
    <property type="interactions" value="12"/>
</dbReference>
<dbReference type="MINT" id="P18052"/>
<dbReference type="STRING" id="10090.ENSMUSP00000076533"/>
<dbReference type="GlyConnect" id="2665">
    <property type="glycosylation" value="1 N-Linked glycan (1 site)"/>
</dbReference>
<dbReference type="GlyCosmos" id="P18052">
    <property type="glycosylation" value="8 sites, 1 glycan"/>
</dbReference>
<dbReference type="GlyGen" id="P18052">
    <property type="glycosylation" value="9 sites, 2 N-linked glycans (1 site), 1 O-linked glycan (1 site)"/>
</dbReference>
<dbReference type="iPTMnet" id="P18052"/>
<dbReference type="PhosphoSitePlus" id="P18052"/>
<dbReference type="SwissPalm" id="P18052"/>
<dbReference type="jPOST" id="P18052"/>
<dbReference type="PaxDb" id="10090-ENSMUSP00000076533"/>
<dbReference type="PeptideAtlas" id="P18052"/>
<dbReference type="ProteomicsDB" id="301915">
    <molecule id="P18052-1"/>
</dbReference>
<dbReference type="ProteomicsDB" id="301916">
    <molecule id="P18052-2"/>
</dbReference>
<dbReference type="Pumba" id="P18052"/>
<dbReference type="Antibodypedia" id="7130">
    <property type="antibodies" value="507 antibodies from 35 providers"/>
</dbReference>
<dbReference type="DNASU" id="19262"/>
<dbReference type="Ensembl" id="ENSMUST00000077303.4">
    <molecule id="P18052-1"/>
    <property type="protein sequence ID" value="ENSMUSP00000076533.4"/>
    <property type="gene ID" value="ENSMUSG00000027303.19"/>
</dbReference>
<dbReference type="GeneID" id="19262"/>
<dbReference type="KEGG" id="mmu:19262"/>
<dbReference type="UCSC" id="uc008mjc.2">
    <molecule id="P18052-1"/>
    <property type="organism name" value="mouse"/>
</dbReference>
<dbReference type="AGR" id="MGI:97808"/>
<dbReference type="CTD" id="5786"/>
<dbReference type="MGI" id="MGI:97808">
    <property type="gene designation" value="Ptpra"/>
</dbReference>
<dbReference type="VEuPathDB" id="HostDB:ENSMUSG00000027303"/>
<dbReference type="eggNOG" id="KOG4228">
    <property type="taxonomic scope" value="Eukaryota"/>
</dbReference>
<dbReference type="GeneTree" id="ENSGT00940000159585"/>
<dbReference type="InParanoid" id="P18052"/>
<dbReference type="OMA" id="TESWEGN"/>
<dbReference type="OrthoDB" id="6144703at2759"/>
<dbReference type="PhylomeDB" id="P18052"/>
<dbReference type="TreeFam" id="TF351829"/>
<dbReference type="Reactome" id="R-MMU-375165">
    <property type="pathway name" value="NCAM signaling for neurite out-growth"/>
</dbReference>
<dbReference type="Reactome" id="R-MMU-5673001">
    <property type="pathway name" value="RAF/MAP kinase cascade"/>
</dbReference>
<dbReference type="BioGRID-ORCS" id="19262">
    <property type="hits" value="2 hits in 77 CRISPR screens"/>
</dbReference>
<dbReference type="ChiTaRS" id="Ptpra">
    <property type="organism name" value="mouse"/>
</dbReference>
<dbReference type="EvolutionaryTrace" id="P18052"/>
<dbReference type="PRO" id="PR:P18052"/>
<dbReference type="Proteomes" id="UP000000589">
    <property type="component" value="Chromosome 2"/>
</dbReference>
<dbReference type="RNAct" id="P18052">
    <property type="molecule type" value="protein"/>
</dbReference>
<dbReference type="Bgee" id="ENSMUSG00000027303">
    <property type="expression patterns" value="Expressed in dentate gyrus of hippocampal formation granule cell and 262 other cell types or tissues"/>
</dbReference>
<dbReference type="ExpressionAtlas" id="P18052">
    <property type="expression patterns" value="baseline and differential"/>
</dbReference>
<dbReference type="GO" id="GO:0005925">
    <property type="term" value="C:focal adhesion"/>
    <property type="evidence" value="ECO:0000315"/>
    <property type="project" value="UniProtKB"/>
</dbReference>
<dbReference type="GO" id="GO:0016020">
    <property type="term" value="C:membrane"/>
    <property type="evidence" value="ECO:0000315"/>
    <property type="project" value="UniProtKB"/>
</dbReference>
<dbReference type="GO" id="GO:0043235">
    <property type="term" value="C:receptor complex"/>
    <property type="evidence" value="ECO:0000266"/>
    <property type="project" value="MGI"/>
</dbReference>
<dbReference type="GO" id="GO:0098685">
    <property type="term" value="C:Schaffer collateral - CA1 synapse"/>
    <property type="evidence" value="ECO:0000314"/>
    <property type="project" value="SynGO"/>
</dbReference>
<dbReference type="GO" id="GO:0097060">
    <property type="term" value="C:synaptic membrane"/>
    <property type="evidence" value="ECO:0000314"/>
    <property type="project" value="SynGO"/>
</dbReference>
<dbReference type="GO" id="GO:0004725">
    <property type="term" value="F:protein tyrosine phosphatase activity"/>
    <property type="evidence" value="ECO:0000315"/>
    <property type="project" value="UniProtKB"/>
</dbReference>
<dbReference type="GO" id="GO:0008286">
    <property type="term" value="P:insulin receptor signaling pathway"/>
    <property type="evidence" value="ECO:0000315"/>
    <property type="project" value="MGI"/>
</dbReference>
<dbReference type="GO" id="GO:0007229">
    <property type="term" value="P:integrin-mediated signaling pathway"/>
    <property type="evidence" value="ECO:0000315"/>
    <property type="project" value="UniProtKB"/>
</dbReference>
<dbReference type="GO" id="GO:0050804">
    <property type="term" value="P:modulation of chemical synaptic transmission"/>
    <property type="evidence" value="ECO:0000314"/>
    <property type="project" value="SynGO"/>
</dbReference>
<dbReference type="GO" id="GO:0051893">
    <property type="term" value="P:regulation of focal adhesion assembly"/>
    <property type="evidence" value="ECO:0000315"/>
    <property type="project" value="UniProtKB"/>
</dbReference>
<dbReference type="CDD" id="cd14621">
    <property type="entry name" value="R-PTPc-A-1"/>
    <property type="match status" value="1"/>
</dbReference>
<dbReference type="CDD" id="cd14623">
    <property type="entry name" value="R-PTPc-A-2"/>
    <property type="match status" value="1"/>
</dbReference>
<dbReference type="FunFam" id="3.90.190.10:FF:000007">
    <property type="entry name" value="Receptor-type tyrosine-protein phosphatase alpha"/>
    <property type="match status" value="1"/>
</dbReference>
<dbReference type="FunFam" id="3.90.190.10:FF:000021">
    <property type="entry name" value="Receptor-type tyrosine-protein phosphatase alpha"/>
    <property type="match status" value="1"/>
</dbReference>
<dbReference type="Gene3D" id="3.90.190.10">
    <property type="entry name" value="Protein tyrosine phosphatase superfamily"/>
    <property type="match status" value="2"/>
</dbReference>
<dbReference type="InterPro" id="IPR029021">
    <property type="entry name" value="Prot-tyrosine_phosphatase-like"/>
</dbReference>
<dbReference type="InterPro" id="IPR050348">
    <property type="entry name" value="Protein-Tyr_Phosphatase"/>
</dbReference>
<dbReference type="InterPro" id="IPR000242">
    <property type="entry name" value="PTP_cat"/>
</dbReference>
<dbReference type="InterPro" id="IPR016130">
    <property type="entry name" value="Tyr_Pase_AS"/>
</dbReference>
<dbReference type="InterPro" id="IPR003595">
    <property type="entry name" value="Tyr_Pase_cat"/>
</dbReference>
<dbReference type="InterPro" id="IPR000387">
    <property type="entry name" value="Tyr_Pase_dom"/>
</dbReference>
<dbReference type="InterPro" id="IPR016336">
    <property type="entry name" value="Tyr_Pase_rcpt_a/e-type"/>
</dbReference>
<dbReference type="InterPro" id="IPR027262">
    <property type="entry name" value="Tyr_Pase_rcpt_alpha"/>
</dbReference>
<dbReference type="PANTHER" id="PTHR19134">
    <property type="entry name" value="RECEPTOR-TYPE TYROSINE-PROTEIN PHOSPHATASE"/>
    <property type="match status" value="1"/>
</dbReference>
<dbReference type="PANTHER" id="PTHR19134:SF433">
    <property type="entry name" value="RECEPTOR-TYPE TYROSINE-PROTEIN PHOSPHATASE ALPHA"/>
    <property type="match status" value="1"/>
</dbReference>
<dbReference type="Pfam" id="PF00102">
    <property type="entry name" value="Y_phosphatase"/>
    <property type="match status" value="2"/>
</dbReference>
<dbReference type="PIRSF" id="PIRSF500808">
    <property type="entry name" value="PTPR_alpha"/>
    <property type="match status" value="1"/>
</dbReference>
<dbReference type="PIRSF" id="PIRSF002006">
    <property type="entry name" value="PTPR_alpha_epsilon"/>
    <property type="match status" value="1"/>
</dbReference>
<dbReference type="PRINTS" id="PR00700">
    <property type="entry name" value="PRTYPHPHTASE"/>
</dbReference>
<dbReference type="SMART" id="SM00194">
    <property type="entry name" value="PTPc"/>
    <property type="match status" value="2"/>
</dbReference>
<dbReference type="SMART" id="SM00404">
    <property type="entry name" value="PTPc_motif"/>
    <property type="match status" value="2"/>
</dbReference>
<dbReference type="SUPFAM" id="SSF52799">
    <property type="entry name" value="(Phosphotyrosine protein) phosphatases II"/>
    <property type="match status" value="2"/>
</dbReference>
<dbReference type="PROSITE" id="PS00383">
    <property type="entry name" value="TYR_PHOSPHATASE_1"/>
    <property type="match status" value="2"/>
</dbReference>
<dbReference type="PROSITE" id="PS50056">
    <property type="entry name" value="TYR_PHOSPHATASE_2"/>
    <property type="match status" value="2"/>
</dbReference>
<dbReference type="PROSITE" id="PS50055">
    <property type="entry name" value="TYR_PHOSPHATASE_PTP"/>
    <property type="match status" value="2"/>
</dbReference>
<evidence type="ECO:0000250" key="1"/>
<evidence type="ECO:0000255" key="2"/>
<evidence type="ECO:0000255" key="3">
    <source>
        <dbReference type="PROSITE-ProRule" id="PRU00160"/>
    </source>
</evidence>
<evidence type="ECO:0000255" key="4">
    <source>
        <dbReference type="PROSITE-ProRule" id="PRU10044"/>
    </source>
</evidence>
<evidence type="ECO:0000256" key="5">
    <source>
        <dbReference type="SAM" id="MobiDB-lite"/>
    </source>
</evidence>
<evidence type="ECO:0000269" key="6">
    <source>
    </source>
</evidence>
<evidence type="ECO:0000269" key="7">
    <source>
    </source>
</evidence>
<evidence type="ECO:0000269" key="8">
    <source>
    </source>
</evidence>
<evidence type="ECO:0000269" key="9">
    <source>
    </source>
</evidence>
<evidence type="ECO:0000303" key="10">
    <source>
    </source>
</evidence>
<evidence type="ECO:0000303" key="11">
    <source>
    </source>
</evidence>
<evidence type="ECO:0000305" key="12"/>
<evidence type="ECO:0007744" key="13">
    <source>
    </source>
</evidence>
<evidence type="ECO:0007744" key="14">
    <source>
    </source>
</evidence>
<evidence type="ECO:0007744" key="15">
    <source>
    </source>
</evidence>
<evidence type="ECO:0007744" key="16">
    <source>
    </source>
</evidence>
<evidence type="ECO:0007829" key="17">
    <source>
        <dbReference type="PDB" id="1P15"/>
    </source>
</evidence>
<evidence type="ECO:0007829" key="18">
    <source>
        <dbReference type="PDB" id="1YFO"/>
    </source>
</evidence>
<keyword id="KW-0002">3D-structure</keyword>
<keyword id="KW-0025">Alternative splicing</keyword>
<keyword id="KW-0965">Cell junction</keyword>
<keyword id="KW-1003">Cell membrane</keyword>
<keyword id="KW-0903">Direct protein sequencing</keyword>
<keyword id="KW-0325">Glycoprotein</keyword>
<keyword id="KW-0378">Hydrolase</keyword>
<keyword id="KW-0472">Membrane</keyword>
<keyword id="KW-0597">Phosphoprotein</keyword>
<keyword id="KW-0904">Protein phosphatase</keyword>
<keyword id="KW-1185">Reference proteome</keyword>
<keyword id="KW-0677">Repeat</keyword>
<keyword id="KW-0732">Signal</keyword>
<keyword id="KW-0812">Transmembrane</keyword>
<keyword id="KW-1133">Transmembrane helix</keyword>
<feature type="signal peptide" evidence="12">
    <location>
        <begin position="1"/>
        <end position="19"/>
    </location>
</feature>
<feature type="chain" id="PRO_0000025434" description="Receptor-type tyrosine-protein phosphatase alpha">
    <location>
        <begin position="20"/>
        <end position="829"/>
    </location>
</feature>
<feature type="topological domain" description="Extracellular" evidence="2">
    <location>
        <begin position="20"/>
        <end position="142"/>
    </location>
</feature>
<feature type="transmembrane region" description="Helical" evidence="2">
    <location>
        <begin position="143"/>
        <end position="166"/>
    </location>
</feature>
<feature type="topological domain" description="Cytoplasmic" evidence="2">
    <location>
        <begin position="167"/>
        <end position="829"/>
    </location>
</feature>
<feature type="domain" description="Tyrosine-protein phosphatase 1" evidence="3">
    <location>
        <begin position="232"/>
        <end position="528"/>
    </location>
</feature>
<feature type="domain" description="Tyrosine-protein phosphatase 2" evidence="3">
    <location>
        <begin position="560"/>
        <end position="818"/>
    </location>
</feature>
<feature type="region of interest" description="Disordered" evidence="5">
    <location>
        <begin position="79"/>
        <end position="106"/>
    </location>
</feature>
<feature type="active site" description="Phosphocysteine intermediate" evidence="1">
    <location>
        <position position="469"/>
    </location>
</feature>
<feature type="active site" description="Phosphocysteine intermediate" evidence="1">
    <location>
        <position position="759"/>
    </location>
</feature>
<feature type="binding site" evidence="1">
    <location>
        <position position="437"/>
    </location>
    <ligand>
        <name>substrate</name>
    </ligand>
</feature>
<feature type="binding site" evidence="1">
    <location>
        <begin position="469"/>
        <end position="475"/>
    </location>
    <ligand>
        <name>substrate</name>
    </ligand>
</feature>
<feature type="binding site" evidence="1">
    <location>
        <position position="513"/>
    </location>
    <ligand>
        <name>substrate</name>
    </ligand>
</feature>
<feature type="modified residue" description="Phosphoserine" evidence="15">
    <location>
        <position position="202"/>
    </location>
</feature>
<feature type="modified residue" description="Phosphoserine" evidence="15">
    <location>
        <position position="204"/>
    </location>
</feature>
<feature type="modified residue" description="Phosphotyrosine" evidence="9 13 14 15 16">
    <location>
        <position position="825"/>
    </location>
</feature>
<feature type="glycosylation site" description="N-linked (GlcNAc...) asparagine" evidence="2">
    <location>
        <position position="21"/>
    </location>
</feature>
<feature type="glycosylation site" description="N-linked (GlcNAc...) asparagine" evidence="2">
    <location>
        <position position="47"/>
    </location>
</feature>
<feature type="glycosylation site" description="N-linked (GlcNAc...) asparagine" evidence="2">
    <location>
        <position position="51"/>
    </location>
</feature>
<feature type="glycosylation site" description="N-linked (GlcNAc...) asparagine" evidence="2">
    <location>
        <position position="68"/>
    </location>
</feature>
<feature type="glycosylation site" description="N-linked (GlcNAc...) asparagine" evidence="2">
    <location>
        <position position="80"/>
    </location>
</feature>
<feature type="glycosylation site" description="N-linked (GlcNAc...) asparagine" evidence="2">
    <location>
        <position position="86"/>
    </location>
</feature>
<feature type="glycosylation site" description="N-linked (GlcNAc...) asparagine" evidence="2">
    <location>
        <position position="104"/>
    </location>
</feature>
<feature type="glycosylation site" description="N-linked (GlcNAc...) asparagine" evidence="2">
    <location>
        <position position="124"/>
    </location>
</feature>
<feature type="splice variant" id="VSP_011880" description="In isoform 2." evidence="10 11">
    <original>F</original>
    <variation>Y</variation>
    <location>
        <position position="268"/>
    </location>
</feature>
<feature type="splice variant" id="VSP_005146" description="In isoform 2." evidence="10 11">
    <location>
        <begin position="269"/>
        <end position="303"/>
    </location>
</feature>
<feature type="sequence conflict" description="In Ref. 1; AAA39448." evidence="12" ref="1">
    <original>L</original>
    <variation>I</variation>
    <location>
        <position position="231"/>
    </location>
</feature>
<feature type="sequence conflict" description="In Ref. 6." evidence="12" ref="6">
    <original>S</original>
    <variation>G</variation>
    <location>
        <position position="326"/>
    </location>
</feature>
<feature type="sequence conflict" description="In Ref. 2." evidence="12" ref="2">
    <original>C</original>
    <variation>S</variation>
    <location>
        <position position="411"/>
    </location>
</feature>
<feature type="helix" evidence="18">
    <location>
        <begin position="214"/>
        <end position="238"/>
    </location>
</feature>
<feature type="helix" evidence="18">
    <location>
        <begin position="249"/>
        <end position="252"/>
    </location>
</feature>
<feature type="helix" evidence="18">
    <location>
        <begin position="254"/>
        <end position="259"/>
    </location>
</feature>
<feature type="turn" evidence="18">
    <location>
        <begin position="305"/>
        <end position="307"/>
    </location>
</feature>
<feature type="turn" evidence="18">
    <location>
        <begin position="318"/>
        <end position="321"/>
    </location>
</feature>
<feature type="strand" evidence="18">
    <location>
        <begin position="324"/>
        <end position="330"/>
    </location>
</feature>
<feature type="strand" evidence="18">
    <location>
        <begin position="333"/>
        <end position="340"/>
    </location>
</feature>
<feature type="helix" evidence="18">
    <location>
        <begin position="345"/>
        <end position="347"/>
    </location>
</feature>
<feature type="helix" evidence="18">
    <location>
        <begin position="348"/>
        <end position="357"/>
    </location>
</feature>
<feature type="strand" evidence="18">
    <location>
        <begin position="362"/>
        <end position="365"/>
    </location>
</feature>
<feature type="strand" evidence="18">
    <location>
        <begin position="369"/>
        <end position="371"/>
    </location>
</feature>
<feature type="strand" evidence="18">
    <location>
        <begin position="383"/>
        <end position="389"/>
    </location>
</feature>
<feature type="strand" evidence="18">
    <location>
        <begin position="392"/>
        <end position="401"/>
    </location>
</feature>
<feature type="strand" evidence="18">
    <location>
        <begin position="403"/>
        <end position="413"/>
    </location>
</feature>
<feature type="strand" evidence="18">
    <location>
        <begin position="425"/>
        <end position="432"/>
    </location>
</feature>
<feature type="strand" evidence="18">
    <location>
        <begin position="437"/>
        <end position="439"/>
    </location>
</feature>
<feature type="helix" evidence="18">
    <location>
        <begin position="445"/>
        <end position="457"/>
    </location>
</feature>
<feature type="strand" evidence="18">
    <location>
        <begin position="465"/>
        <end position="468"/>
    </location>
</feature>
<feature type="strand" evidence="18">
    <location>
        <begin position="470"/>
        <end position="473"/>
    </location>
</feature>
<feature type="helix" evidence="18">
    <location>
        <begin position="474"/>
        <end position="491"/>
    </location>
</feature>
<feature type="strand" evidence="18">
    <location>
        <begin position="492"/>
        <end position="495"/>
    </location>
</feature>
<feature type="helix" evidence="18">
    <location>
        <begin position="497"/>
        <end position="504"/>
    </location>
</feature>
<feature type="turn" evidence="18">
    <location>
        <begin position="505"/>
        <end position="507"/>
    </location>
</feature>
<feature type="helix" evidence="18">
    <location>
        <begin position="515"/>
        <end position="530"/>
    </location>
</feature>
<feature type="helix" evidence="17">
    <location>
        <begin position="579"/>
        <end position="581"/>
    </location>
</feature>
<feature type="turn" evidence="17">
    <location>
        <begin position="583"/>
        <end position="585"/>
    </location>
</feature>
<feature type="strand" evidence="17">
    <location>
        <begin position="608"/>
        <end position="612"/>
    </location>
</feature>
<feature type="strand" evidence="17">
    <location>
        <begin position="617"/>
        <end position="621"/>
    </location>
</feature>
<feature type="strand" evidence="17">
    <location>
        <begin position="630"/>
        <end position="633"/>
    </location>
</feature>
<feature type="strand" evidence="17">
    <location>
        <begin position="638"/>
        <end position="640"/>
    </location>
</feature>
<feature type="helix" evidence="17">
    <location>
        <begin position="641"/>
        <end position="650"/>
    </location>
</feature>
<feature type="strand" evidence="17">
    <location>
        <begin position="655"/>
        <end position="658"/>
    </location>
</feature>
<feature type="strand" evidence="17">
    <location>
        <begin position="664"/>
        <end position="667"/>
    </location>
</feature>
<feature type="strand" evidence="17">
    <location>
        <begin position="676"/>
        <end position="678"/>
    </location>
</feature>
<feature type="strand" evidence="17">
    <location>
        <begin position="696"/>
        <end position="706"/>
    </location>
</feature>
<feature type="strand" evidence="17">
    <location>
        <begin position="712"/>
        <end position="721"/>
    </location>
</feature>
<feature type="strand" evidence="17">
    <location>
        <begin position="726"/>
        <end position="728"/>
    </location>
</feature>
<feature type="strand" evidence="17">
    <location>
        <begin position="731"/>
        <end position="733"/>
    </location>
</feature>
<feature type="helix" evidence="17">
    <location>
        <begin position="736"/>
        <end position="746"/>
    </location>
</feature>
<feature type="turn" evidence="17">
    <location>
        <begin position="747"/>
        <end position="751"/>
    </location>
</feature>
<feature type="strand" evidence="17">
    <location>
        <begin position="755"/>
        <end position="763"/>
    </location>
</feature>
<feature type="helix" evidence="17">
    <location>
        <begin position="764"/>
        <end position="782"/>
    </location>
</feature>
<feature type="helix" evidence="17">
    <location>
        <begin position="789"/>
        <end position="795"/>
    </location>
</feature>
<feature type="turn" evidence="17">
    <location>
        <begin position="805"/>
        <end position="808"/>
    </location>
</feature>
<feature type="helix" evidence="17">
    <location>
        <begin position="809"/>
        <end position="817"/>
    </location>
</feature>
<feature type="turn" evidence="17">
    <location>
        <begin position="818"/>
        <end position="820"/>
    </location>
</feature>
<comment type="function">
    <text evidence="9">Tyrosine protein phosphatase which is involved in integrin-mediated focal adhesion formation (PubMed:22801373). Following integrin engagement, specifically recruits BCAR3, BCAR1 and CRK to focal adhesions thereby promoting SRC-mediated phosphorylation of BRAC1 and the subsequent activation of PAK and small GTPase RAC1 and CDC42 (PubMed:22801373).</text>
</comment>
<comment type="catalytic activity">
    <reaction evidence="4">
        <text>O-phospho-L-tyrosyl-[protein] + H2O = L-tyrosyl-[protein] + phosphate</text>
        <dbReference type="Rhea" id="RHEA:10684"/>
        <dbReference type="Rhea" id="RHEA-COMP:10136"/>
        <dbReference type="Rhea" id="RHEA-COMP:20101"/>
        <dbReference type="ChEBI" id="CHEBI:15377"/>
        <dbReference type="ChEBI" id="CHEBI:43474"/>
        <dbReference type="ChEBI" id="CHEBI:46858"/>
        <dbReference type="ChEBI" id="CHEBI:61978"/>
        <dbReference type="EC" id="3.1.3.48"/>
    </reaction>
</comment>
<comment type="subunit">
    <text evidence="9">Part of a complex comprised of PTPRA, BCAR1, BCAR3 (via SH2 domain), and SRC (PubMed:22801373). Within the complex, interacts (when phosphorylated on Tyr-825) with BCAR3 (via SH2 domain) (PubMed:22801373). Interacts with GRB2 (PubMed:22801373).</text>
</comment>
<comment type="interaction">
    <interactant intactId="EBI-6597520">
        <id>P18052</id>
    </interactant>
    <interactant intactId="EBI-7703109">
        <id>P70232</id>
        <label>Chl1</label>
    </interactant>
    <organismsDiffer>false</organismsDiffer>
    <experiments>4</experiments>
</comment>
<comment type="interaction">
    <interactant intactId="EBI-6597520">
        <id>P18052</id>
    </interactant>
    <interactant intactId="EBI-1688">
        <id>Q60631</id>
        <label>Grb2</label>
    </interactant>
    <organismsDiffer>false</organismsDiffer>
    <experiments>4</experiments>
</comment>
<comment type="interaction">
    <interactant intactId="EBI-6597520">
        <id>P18052</id>
    </interactant>
    <interactant intactId="EBI-8328895">
        <id>Q60673</id>
        <label>Ptprn</label>
    </interactant>
    <organismsDiffer>false</organismsDiffer>
    <experiments>3</experiments>
</comment>
<comment type="interaction">
    <interactant intactId="EBI-6597520">
        <id>P18052</id>
    </interactant>
    <interactant intactId="EBI-298680">
        <id>P05480</id>
        <label>Src</label>
    </interactant>
    <organismsDiffer>false</organismsDiffer>
    <experiments>2</experiments>
</comment>
<comment type="interaction">
    <interactant intactId="EBI-6597520">
        <id>P18052</id>
    </interactant>
    <interactant intactId="EBI-397072">
        <id>P68403</id>
        <label>Prkcb</label>
    </interactant>
    <organismsDiffer>true</organismsDiffer>
    <experiments>3</experiments>
</comment>
<comment type="interaction">
    <interactant intactId="EBI-6597520">
        <id>P18052</id>
    </interactant>
    <interactant intactId="EBI-848039">
        <id>P00523</id>
        <label>SRC</label>
    </interactant>
    <organismsDiffer>true</organismsDiffer>
    <experiments>2</experiments>
</comment>
<comment type="interaction">
    <interactant intactId="EBI-6597520">
        <id>P18052</id>
    </interactant>
    <interactant intactId="EBI-621482">
        <id>P12931</id>
        <label>SRC</label>
    </interactant>
    <organismsDiffer>true</organismsDiffer>
    <experiments>3</experiments>
</comment>
<comment type="subcellular location">
    <subcellularLocation>
        <location evidence="9">Cell membrane</location>
        <topology evidence="2">Single-pass type I membrane protein</topology>
    </subcellularLocation>
    <subcellularLocation>
        <location evidence="9">Cell junction</location>
        <location evidence="9">Focal adhesion</location>
    </subcellularLocation>
    <text evidence="9">Localizes to focal adhesion sites following integrin engagement.</text>
</comment>
<comment type="alternative products">
    <event type="alternative splicing"/>
    <isoform>
        <id>P18052-1</id>
        <name>1</name>
        <name>Long</name>
        <sequence type="displayed"/>
    </isoform>
    <isoform>
        <id>P18052-2</id>
        <name>2</name>
        <name>Short</name>
        <sequence type="described" ref="VSP_011880 VSP_005146"/>
    </isoform>
</comment>
<comment type="tissue specificity">
    <text evidence="6 7 8">Widely expressed. Highest expression in brain and kidney.</text>
</comment>
<comment type="PTM">
    <text evidence="9">Integrin binding to extracellular matrix induces phosphorylation at Tyr-825 which induces PTPRA localization and recruitment of BCAR3, BCAR1 and CRK to focal adhesions.</text>
</comment>
<comment type="similarity">
    <text evidence="12">Belongs to the protein-tyrosine phosphatase family. Receptor class 4 subfamily.</text>
</comment>